<reference key="1">
    <citation type="journal article" date="2003" name="Proc. Natl. Acad. Sci. U.S.A.">
        <title>The complete genome sequence of Chromobacterium violaceum reveals remarkable and exploitable bacterial adaptability.</title>
        <authorList>
            <person name="Vasconcelos A.T.R."/>
            <person name="de Almeida D.F."/>
            <person name="Hungria M."/>
            <person name="Guimaraes C.T."/>
            <person name="Antonio R.V."/>
            <person name="Almeida F.C."/>
            <person name="de Almeida L.G.P."/>
            <person name="de Almeida R."/>
            <person name="Alves-Gomes J.A."/>
            <person name="Andrade E.M."/>
            <person name="Araripe J."/>
            <person name="de Araujo M.F.F."/>
            <person name="Astolfi-Filho S."/>
            <person name="Azevedo V."/>
            <person name="Baptista A.J."/>
            <person name="Bataus L.A.M."/>
            <person name="Batista J.S."/>
            <person name="Belo A."/>
            <person name="van den Berg C."/>
            <person name="Bogo M."/>
            <person name="Bonatto S."/>
            <person name="Bordignon J."/>
            <person name="Brigido M.M."/>
            <person name="Brito C.A."/>
            <person name="Brocchi M."/>
            <person name="Burity H.A."/>
            <person name="Camargo A.A."/>
            <person name="Cardoso D.D.P."/>
            <person name="Carneiro N.P."/>
            <person name="Carraro D.M."/>
            <person name="Carvalho C.M.B."/>
            <person name="Cascardo J.C.M."/>
            <person name="Cavada B.S."/>
            <person name="Chueire L.M.O."/>
            <person name="Creczynski-Pasa T.B."/>
            <person name="Cunha-Junior N.C."/>
            <person name="Fagundes N."/>
            <person name="Falcao C.L."/>
            <person name="Fantinatti F."/>
            <person name="Farias I.P."/>
            <person name="Felipe M.S.S."/>
            <person name="Ferrari L.P."/>
            <person name="Ferro J.A."/>
            <person name="Ferro M.I.T."/>
            <person name="Franco G.R."/>
            <person name="Freitas N.S.A."/>
            <person name="Furlan L.R."/>
            <person name="Gazzinelli R.T."/>
            <person name="Gomes E.A."/>
            <person name="Goncalves P.R."/>
            <person name="Grangeiro T.B."/>
            <person name="Grattapaglia D."/>
            <person name="Grisard E.C."/>
            <person name="Hanna E.S."/>
            <person name="Jardim S.N."/>
            <person name="Laurino J."/>
            <person name="Leoi L.C.T."/>
            <person name="Lima L.F.A."/>
            <person name="Loureiro M.F."/>
            <person name="Lyra M.C.C.P."/>
            <person name="Madeira H.M.F."/>
            <person name="Manfio G.P."/>
            <person name="Maranhao A.Q."/>
            <person name="Martins W.S."/>
            <person name="di Mauro S.M.Z."/>
            <person name="de Medeiros S.R.B."/>
            <person name="Meissner R.V."/>
            <person name="Moreira M.A.M."/>
            <person name="Nascimento F.F."/>
            <person name="Nicolas M.F."/>
            <person name="Oliveira J.G."/>
            <person name="Oliveira S.C."/>
            <person name="Paixao R.F.C."/>
            <person name="Parente J.A."/>
            <person name="Pedrosa F.O."/>
            <person name="Pena S.D.J."/>
            <person name="Pereira J.O."/>
            <person name="Pereira M."/>
            <person name="Pinto L.S.R.C."/>
            <person name="Pinto L.S."/>
            <person name="Porto J.I.R."/>
            <person name="Potrich D.P."/>
            <person name="Ramalho-Neto C.E."/>
            <person name="Reis A.M.M."/>
            <person name="Rigo L.U."/>
            <person name="Rondinelli E."/>
            <person name="Santos E.B.P."/>
            <person name="Santos F.R."/>
            <person name="Schneider M.P.C."/>
            <person name="Seuanez H.N."/>
            <person name="Silva A.M.R."/>
            <person name="da Silva A.L.C."/>
            <person name="Silva D.W."/>
            <person name="Silva R."/>
            <person name="Simoes I.C."/>
            <person name="Simon D."/>
            <person name="Soares C.M.A."/>
            <person name="Soares R.B.A."/>
            <person name="Souza E.M."/>
            <person name="Souza K.R.L."/>
            <person name="Souza R.C."/>
            <person name="Steffens M.B.R."/>
            <person name="Steindel M."/>
            <person name="Teixeira S.R."/>
            <person name="Urmenyi T."/>
            <person name="Vettore A."/>
            <person name="Wassem R."/>
            <person name="Zaha A."/>
            <person name="Simpson A.J.G."/>
        </authorList>
    </citation>
    <scope>NUCLEOTIDE SEQUENCE [LARGE SCALE GENOMIC DNA]</scope>
    <source>
        <strain>ATCC 12472 / DSM 30191 / JCM 1249 / CCUG 213 / NBRC 12614 / NCIMB 9131 / NCTC 9757 / MK</strain>
    </source>
</reference>
<proteinExistence type="inferred from homology"/>
<accession>Q7NRN0</accession>
<organism>
    <name type="scientific">Chromobacterium violaceum (strain ATCC 12472 / DSM 30191 / JCM 1249 / CCUG 213 / NBRC 12614 / NCIMB 9131 / NCTC 9757 / MK)</name>
    <dbReference type="NCBI Taxonomy" id="243365"/>
    <lineage>
        <taxon>Bacteria</taxon>
        <taxon>Pseudomonadati</taxon>
        <taxon>Pseudomonadota</taxon>
        <taxon>Betaproteobacteria</taxon>
        <taxon>Neisseriales</taxon>
        <taxon>Chromobacteriaceae</taxon>
        <taxon>Chromobacterium</taxon>
    </lineage>
</organism>
<keyword id="KW-0963">Cytoplasm</keyword>
<keyword id="KW-0521">NADP</keyword>
<keyword id="KW-0560">Oxidoreductase</keyword>
<keyword id="KW-0671">Queuosine biosynthesis</keyword>
<keyword id="KW-1185">Reference proteome</keyword>
<name>QUEF_CHRVO</name>
<sequence length="279" mass="30700">MNIHAATPEHSPLGKTVSYQDQYDPSLLFPIARQTKRDEIGVDEAALPFAGVDIWTGFELSWLNARGKPQIGIATFRIPAGSPRLIESKSFKLYLNSYNQTRMDGIDALAAQLARDLSAAAGAEVAVSIALPQAFAAERIAELAGECIDELDIAVDNYAPCPEILSADSTAIVSETLCSNLLKSNCLVTGQPDWGSVSIRYTGPKIDREALLRYLIGFRRHNEFHEQCVERIFVDVLRACAPTKLTVYARYTRRGGLDINPWRSNCDAAPTDNVRTARQ</sequence>
<feature type="chain" id="PRO_0000163026" description="NADPH-dependent 7-cyano-7-deazaguanine reductase">
    <location>
        <begin position="1"/>
        <end position="279"/>
    </location>
</feature>
<feature type="active site" description="Thioimide intermediate" evidence="1">
    <location>
        <position position="186"/>
    </location>
</feature>
<feature type="active site" description="Proton donor" evidence="1">
    <location>
        <position position="193"/>
    </location>
</feature>
<feature type="binding site" evidence="1">
    <location>
        <begin position="86"/>
        <end position="88"/>
    </location>
    <ligand>
        <name>substrate</name>
    </ligand>
</feature>
<feature type="binding site" evidence="1">
    <location>
        <begin position="88"/>
        <end position="89"/>
    </location>
    <ligand>
        <name>NADPH</name>
        <dbReference type="ChEBI" id="CHEBI:57783"/>
    </ligand>
</feature>
<feature type="binding site" evidence="1">
    <location>
        <begin position="225"/>
        <end position="226"/>
    </location>
    <ligand>
        <name>substrate</name>
    </ligand>
</feature>
<feature type="binding site" evidence="1">
    <location>
        <begin position="254"/>
        <end position="255"/>
    </location>
    <ligand>
        <name>NADPH</name>
        <dbReference type="ChEBI" id="CHEBI:57783"/>
    </ligand>
</feature>
<protein>
    <recommendedName>
        <fullName evidence="1">NADPH-dependent 7-cyano-7-deazaguanine reductase</fullName>
        <ecNumber evidence="1">1.7.1.13</ecNumber>
    </recommendedName>
    <alternativeName>
        <fullName evidence="1">7-cyano-7-carbaguanine reductase</fullName>
    </alternativeName>
    <alternativeName>
        <fullName evidence="1">NADPH-dependent nitrile oxidoreductase</fullName>
    </alternativeName>
    <alternativeName>
        <fullName evidence="1">PreQ(0) reductase</fullName>
    </alternativeName>
</protein>
<dbReference type="EC" id="1.7.1.13" evidence="1"/>
<dbReference type="EMBL" id="AE016825">
    <property type="protein sequence ID" value="AAQ61412.1"/>
    <property type="molecule type" value="Genomic_DNA"/>
</dbReference>
<dbReference type="RefSeq" id="WP_011137297.1">
    <property type="nucleotide sequence ID" value="NC_005085.1"/>
</dbReference>
<dbReference type="SMR" id="Q7NRN0"/>
<dbReference type="STRING" id="243365.CV_3750"/>
<dbReference type="KEGG" id="cvi:CV_3750"/>
<dbReference type="eggNOG" id="COG0780">
    <property type="taxonomic scope" value="Bacteria"/>
</dbReference>
<dbReference type="eggNOG" id="COG2904">
    <property type="taxonomic scope" value="Bacteria"/>
</dbReference>
<dbReference type="HOGENOM" id="CLU_054738_0_0_4"/>
<dbReference type="OrthoDB" id="9789995at2"/>
<dbReference type="UniPathway" id="UPA00392"/>
<dbReference type="Proteomes" id="UP000001424">
    <property type="component" value="Chromosome"/>
</dbReference>
<dbReference type="GO" id="GO:0005737">
    <property type="term" value="C:cytoplasm"/>
    <property type="evidence" value="ECO:0007669"/>
    <property type="project" value="UniProtKB-SubCell"/>
</dbReference>
<dbReference type="GO" id="GO:0033739">
    <property type="term" value="F:preQ1 synthase activity"/>
    <property type="evidence" value="ECO:0007669"/>
    <property type="project" value="UniProtKB-UniRule"/>
</dbReference>
<dbReference type="GO" id="GO:0008616">
    <property type="term" value="P:queuosine biosynthetic process"/>
    <property type="evidence" value="ECO:0007669"/>
    <property type="project" value="UniProtKB-UniRule"/>
</dbReference>
<dbReference type="GO" id="GO:0006400">
    <property type="term" value="P:tRNA modification"/>
    <property type="evidence" value="ECO:0007669"/>
    <property type="project" value="UniProtKB-UniRule"/>
</dbReference>
<dbReference type="Gene3D" id="3.30.1130.10">
    <property type="match status" value="2"/>
</dbReference>
<dbReference type="HAMAP" id="MF_00817">
    <property type="entry name" value="QueF_type2"/>
    <property type="match status" value="1"/>
</dbReference>
<dbReference type="InterPro" id="IPR043133">
    <property type="entry name" value="GTP-CH-I_C/QueF"/>
</dbReference>
<dbReference type="InterPro" id="IPR050084">
    <property type="entry name" value="NADPH_dep_7-cyano-7-deazaG_red"/>
</dbReference>
<dbReference type="InterPro" id="IPR029500">
    <property type="entry name" value="QueF"/>
</dbReference>
<dbReference type="InterPro" id="IPR029139">
    <property type="entry name" value="QueF_N"/>
</dbReference>
<dbReference type="InterPro" id="IPR016428">
    <property type="entry name" value="QueF_type2"/>
</dbReference>
<dbReference type="NCBIfam" id="TIGR03138">
    <property type="entry name" value="QueF"/>
    <property type="match status" value="1"/>
</dbReference>
<dbReference type="PANTHER" id="PTHR34354">
    <property type="entry name" value="NADPH-DEPENDENT 7-CYANO-7-DEAZAGUANINE REDUCTASE"/>
    <property type="match status" value="1"/>
</dbReference>
<dbReference type="PANTHER" id="PTHR34354:SF1">
    <property type="entry name" value="NADPH-DEPENDENT 7-CYANO-7-DEAZAGUANINE REDUCTASE"/>
    <property type="match status" value="1"/>
</dbReference>
<dbReference type="Pfam" id="PF14489">
    <property type="entry name" value="QueF"/>
    <property type="match status" value="1"/>
</dbReference>
<dbReference type="Pfam" id="PF14819">
    <property type="entry name" value="QueF_N"/>
    <property type="match status" value="1"/>
</dbReference>
<dbReference type="PIRSF" id="PIRSF004750">
    <property type="entry name" value="Nitrile_oxidored_YqcD_prd"/>
    <property type="match status" value="1"/>
</dbReference>
<dbReference type="SUPFAM" id="SSF55620">
    <property type="entry name" value="Tetrahydrobiopterin biosynthesis enzymes-like"/>
    <property type="match status" value="1"/>
</dbReference>
<gene>
    <name evidence="1" type="primary">queF</name>
    <name type="ordered locus">CV_3750</name>
</gene>
<comment type="function">
    <text evidence="1">Catalyzes the NADPH-dependent reduction of 7-cyano-7-deazaguanine (preQ0) to 7-aminomethyl-7-deazaguanine (preQ1).</text>
</comment>
<comment type="catalytic activity">
    <reaction evidence="1">
        <text>7-aminomethyl-7-carbaguanine + 2 NADP(+) = 7-cyano-7-deazaguanine + 2 NADPH + 3 H(+)</text>
        <dbReference type="Rhea" id="RHEA:13409"/>
        <dbReference type="ChEBI" id="CHEBI:15378"/>
        <dbReference type="ChEBI" id="CHEBI:45075"/>
        <dbReference type="ChEBI" id="CHEBI:57783"/>
        <dbReference type="ChEBI" id="CHEBI:58349"/>
        <dbReference type="ChEBI" id="CHEBI:58703"/>
        <dbReference type="EC" id="1.7.1.13"/>
    </reaction>
</comment>
<comment type="pathway">
    <text evidence="1">tRNA modification; tRNA-queuosine biosynthesis.</text>
</comment>
<comment type="subunit">
    <text evidence="1">Homodimer.</text>
</comment>
<comment type="subcellular location">
    <subcellularLocation>
        <location evidence="1">Cytoplasm</location>
    </subcellularLocation>
</comment>
<comment type="similarity">
    <text evidence="1">Belongs to the GTP cyclohydrolase I family. QueF type 2 subfamily.</text>
</comment>
<evidence type="ECO:0000255" key="1">
    <source>
        <dbReference type="HAMAP-Rule" id="MF_00817"/>
    </source>
</evidence>